<feature type="chain" id="PRO_0000052063" description="Cytochrome P450 71A12">
    <location>
        <begin position="1"/>
        <end position="497"/>
    </location>
</feature>
<feature type="transmembrane region" description="Helical" evidence="2">
    <location>
        <begin position="4"/>
        <end position="24"/>
    </location>
</feature>
<feature type="binding site" description="axial binding residue" evidence="1">
    <location>
        <position position="439"/>
    </location>
    <ligand>
        <name>heme</name>
        <dbReference type="ChEBI" id="CHEBI:30413"/>
    </ligand>
    <ligandPart>
        <name>Fe</name>
        <dbReference type="ChEBI" id="CHEBI:18248"/>
    </ligandPart>
</feature>
<sequence>MEMILMVSLCLTTLITLFLLKQFLKRTANKVNLPPSPWRLPLIGNLHQLSLHPHRSLHSLSLRYGPLMLLHFGRVPILVVSSGEAAQEVLKTHDLKFANRPRSKAVHGLMNGGRDVVFGPYGEYWRQMKSVCILNLLTNKMVASFEKIREEELNEMIKKLEKASSSSSSENLSELFVTLPSDVTSRIALGRKHSEDETARDLKKRVRQIMELLGEFPIGDYVPALAWIDRINGFNARIKEVSQGFSDLMDKVVQEHLEAGNHKEDFVDILLSIESEKSIGFQAQRDDIKFMILDMFIGGTSTSSTLLEWIMTELIRNPNVMKKLQDEIRSTIRPHGSYIKEKDVENMKYLKAVIKEVFRVHPPLPLILPRLLSEDVKVKGYNIAAGTEVIINAWAIQRDPAIWGPDAEEFKPERHLDSTLDYHGKDLNFIPFGSGRRICPGINLALGLVEVTVANLVGRFDWRAEAGPNGDQPDLTEAFGLDVCRKFPLIAFPSSVI</sequence>
<organism>
    <name type="scientific">Arabidopsis thaliana</name>
    <name type="common">Mouse-ear cress</name>
    <dbReference type="NCBI Taxonomy" id="3702"/>
    <lineage>
        <taxon>Eukaryota</taxon>
        <taxon>Viridiplantae</taxon>
        <taxon>Streptophyta</taxon>
        <taxon>Embryophyta</taxon>
        <taxon>Tracheophyta</taxon>
        <taxon>Spermatophyta</taxon>
        <taxon>Magnoliopsida</taxon>
        <taxon>eudicotyledons</taxon>
        <taxon>Gunneridae</taxon>
        <taxon>Pentapetalae</taxon>
        <taxon>rosids</taxon>
        <taxon>malvids</taxon>
        <taxon>Brassicales</taxon>
        <taxon>Brassicaceae</taxon>
        <taxon>Camelineae</taxon>
        <taxon>Arabidopsis</taxon>
    </lineage>
</organism>
<dbReference type="EC" id="1.14.-.-" evidence="4"/>
<dbReference type="EMBL" id="AC002340">
    <property type="protein sequence ID" value="AAC02746.1"/>
    <property type="molecule type" value="Genomic_DNA"/>
</dbReference>
<dbReference type="EMBL" id="CP002685">
    <property type="protein sequence ID" value="AEC08435.2"/>
    <property type="molecule type" value="Genomic_DNA"/>
</dbReference>
<dbReference type="EMBL" id="AY094484">
    <property type="protein sequence ID" value="AAM19850.1"/>
    <property type="status" value="ALT_INIT"/>
    <property type="molecule type" value="mRNA"/>
</dbReference>
<dbReference type="EMBL" id="BT001046">
    <property type="protein sequence ID" value="AAN46800.1"/>
    <property type="status" value="ALT_INIT"/>
    <property type="molecule type" value="mRNA"/>
</dbReference>
<dbReference type="PIR" id="C84712">
    <property type="entry name" value="C84712"/>
</dbReference>
<dbReference type="RefSeq" id="NP_180633.3">
    <property type="nucleotide sequence ID" value="NM_128628.4"/>
</dbReference>
<dbReference type="SMR" id="O49340"/>
<dbReference type="BioGRID" id="2975">
    <property type="interactions" value="2"/>
</dbReference>
<dbReference type="ComplexPortal" id="CPX-2833">
    <property type="entry name" value="Camalexin biosynthetic metabolon complex"/>
</dbReference>
<dbReference type="FunCoup" id="O49340">
    <property type="interactions" value="246"/>
</dbReference>
<dbReference type="IntAct" id="O49340">
    <property type="interactions" value="5"/>
</dbReference>
<dbReference type="STRING" id="3702.O49340"/>
<dbReference type="PaxDb" id="3702-AT2G30750.1"/>
<dbReference type="ProteomicsDB" id="222826"/>
<dbReference type="EnsemblPlants" id="AT2G30750.1">
    <property type="protein sequence ID" value="AT2G30750.1"/>
    <property type="gene ID" value="AT2G30750"/>
</dbReference>
<dbReference type="GeneID" id="817626"/>
<dbReference type="Gramene" id="AT2G30750.1">
    <property type="protein sequence ID" value="AT2G30750.1"/>
    <property type="gene ID" value="AT2G30750"/>
</dbReference>
<dbReference type="KEGG" id="ath:AT2G30750"/>
<dbReference type="Araport" id="AT2G30750"/>
<dbReference type="TAIR" id="AT2G30750">
    <property type="gene designation" value="CYP71A12"/>
</dbReference>
<dbReference type="eggNOG" id="KOG0156">
    <property type="taxonomic scope" value="Eukaryota"/>
</dbReference>
<dbReference type="HOGENOM" id="CLU_001570_4_0_1"/>
<dbReference type="InParanoid" id="O49340"/>
<dbReference type="OMA" id="MEMILMV"/>
<dbReference type="OrthoDB" id="1078298at2759"/>
<dbReference type="PhylomeDB" id="O49340"/>
<dbReference type="PRO" id="PR:O49340"/>
<dbReference type="Proteomes" id="UP000006548">
    <property type="component" value="Chromosome 2"/>
</dbReference>
<dbReference type="ExpressionAtlas" id="O49340">
    <property type="expression patterns" value="baseline and differential"/>
</dbReference>
<dbReference type="GO" id="GO:0016020">
    <property type="term" value="C:membrane"/>
    <property type="evidence" value="ECO:0007669"/>
    <property type="project" value="UniProtKB-SubCell"/>
</dbReference>
<dbReference type="GO" id="GO:0020037">
    <property type="term" value="F:heme binding"/>
    <property type="evidence" value="ECO:0007669"/>
    <property type="project" value="InterPro"/>
</dbReference>
<dbReference type="GO" id="GO:0005506">
    <property type="term" value="F:iron ion binding"/>
    <property type="evidence" value="ECO:0007669"/>
    <property type="project" value="InterPro"/>
</dbReference>
<dbReference type="GO" id="GO:0004497">
    <property type="term" value="F:monooxygenase activity"/>
    <property type="evidence" value="ECO:0007669"/>
    <property type="project" value="UniProtKB-KW"/>
</dbReference>
<dbReference type="GO" id="GO:0016705">
    <property type="term" value="F:oxidoreductase activity, acting on paired donors, with incorporation or reduction of molecular oxygen"/>
    <property type="evidence" value="ECO:0007669"/>
    <property type="project" value="InterPro"/>
</dbReference>
<dbReference type="CDD" id="cd11072">
    <property type="entry name" value="CYP71-like"/>
    <property type="match status" value="1"/>
</dbReference>
<dbReference type="FunFam" id="1.10.630.10:FF:000011">
    <property type="entry name" value="Cytochrome P450 83B1"/>
    <property type="match status" value="1"/>
</dbReference>
<dbReference type="Gene3D" id="1.10.630.10">
    <property type="entry name" value="Cytochrome P450"/>
    <property type="match status" value="1"/>
</dbReference>
<dbReference type="InterPro" id="IPR001128">
    <property type="entry name" value="Cyt_P450"/>
</dbReference>
<dbReference type="InterPro" id="IPR017972">
    <property type="entry name" value="Cyt_P450_CS"/>
</dbReference>
<dbReference type="InterPro" id="IPR002401">
    <property type="entry name" value="Cyt_P450_E_grp-I"/>
</dbReference>
<dbReference type="InterPro" id="IPR036396">
    <property type="entry name" value="Cyt_P450_sf"/>
</dbReference>
<dbReference type="PANTHER" id="PTHR47955:SF15">
    <property type="entry name" value="CYTOCHROME P450 71A2-LIKE"/>
    <property type="match status" value="1"/>
</dbReference>
<dbReference type="PANTHER" id="PTHR47955">
    <property type="entry name" value="CYTOCHROME P450 FAMILY 71 PROTEIN"/>
    <property type="match status" value="1"/>
</dbReference>
<dbReference type="Pfam" id="PF00067">
    <property type="entry name" value="p450"/>
    <property type="match status" value="1"/>
</dbReference>
<dbReference type="PRINTS" id="PR00463">
    <property type="entry name" value="EP450I"/>
</dbReference>
<dbReference type="PRINTS" id="PR00385">
    <property type="entry name" value="P450"/>
</dbReference>
<dbReference type="SUPFAM" id="SSF48264">
    <property type="entry name" value="Cytochrome P450"/>
    <property type="match status" value="1"/>
</dbReference>
<dbReference type="PROSITE" id="PS00086">
    <property type="entry name" value="CYTOCHROME_P450"/>
    <property type="match status" value="1"/>
</dbReference>
<accession>O49340</accession>
<accession>F4INX7</accession>
<accession>Q8LPP9</accession>
<protein>
    <recommendedName>
        <fullName>Cytochrome P450 71A12</fullName>
        <ecNumber evidence="4">1.14.-.-</ecNumber>
    </recommendedName>
</protein>
<proteinExistence type="evidence at protein level"/>
<keyword id="KW-0349">Heme</keyword>
<keyword id="KW-0408">Iron</keyword>
<keyword id="KW-0472">Membrane</keyword>
<keyword id="KW-0479">Metal-binding</keyword>
<keyword id="KW-0503">Monooxygenase</keyword>
<keyword id="KW-0560">Oxidoreductase</keyword>
<keyword id="KW-1185">Reference proteome</keyword>
<keyword id="KW-0812">Transmembrane</keyword>
<keyword id="KW-1133">Transmembrane helix</keyword>
<comment type="function">
    <text evidence="3">Converts indole-3-acetaldoxime to indole cyanohydrin. Involved in the biosynthetic pathway to 4-hydroxyindole-3-carbonyl nitrile (4-OH-ICN), a cyanogenic metabolite required for inducible pathogen defense.</text>
</comment>
<comment type="cofactor">
    <cofactor evidence="1">
        <name>heme</name>
        <dbReference type="ChEBI" id="CHEBI:30413"/>
    </cofactor>
</comment>
<comment type="interaction">
    <interactant intactId="EBI-30855500">
        <id>O49340</id>
    </interactant>
    <interactant intactId="EBI-16915951">
        <id>Q9LW27</id>
        <label>CYP71B15</label>
    </interactant>
    <organismsDiffer>false</organismsDiffer>
    <experiments>5</experiments>
</comment>
<comment type="subcellular location">
    <subcellularLocation>
        <location evidence="2">Membrane</location>
        <topology evidence="2">Single-pass membrane protein</topology>
    </subcellularLocation>
</comment>
<comment type="disruption phenotype">
    <text evidence="3">90% decrease of all indole-3-carbonyl nitrile (ICN) derivatives and increased susceptibility to virulent Pseudomonas syringae.</text>
</comment>
<comment type="similarity">
    <text evidence="4">Belongs to the cytochrome P450 family.</text>
</comment>
<comment type="sequence caution" evidence="4">
    <conflict type="erroneous initiation">
        <sequence resource="EMBL-CDS" id="AAM19850"/>
    </conflict>
    <text>Extended N-terminus.</text>
</comment>
<comment type="sequence caution" evidence="4">
    <conflict type="erroneous initiation">
        <sequence resource="EMBL-CDS" id="AAN46800"/>
    </conflict>
    <text>Extended N-terminus.</text>
</comment>
<evidence type="ECO:0000250" key="1"/>
<evidence type="ECO:0000255" key="2"/>
<evidence type="ECO:0000269" key="3">
    <source>
    </source>
</evidence>
<evidence type="ECO:0000305" key="4"/>
<gene>
    <name type="primary">CYP71A12</name>
    <name type="ordered locus">At2g30750</name>
    <name type="ORF">T11J7.14</name>
</gene>
<name>C71AC_ARATH</name>
<reference key="1">
    <citation type="journal article" date="1999" name="Nature">
        <title>Sequence and analysis of chromosome 2 of the plant Arabidopsis thaliana.</title>
        <authorList>
            <person name="Lin X."/>
            <person name="Kaul S."/>
            <person name="Rounsley S.D."/>
            <person name="Shea T.P."/>
            <person name="Benito M.-I."/>
            <person name="Town C.D."/>
            <person name="Fujii C.Y."/>
            <person name="Mason T.M."/>
            <person name="Bowman C.L."/>
            <person name="Barnstead M.E."/>
            <person name="Feldblyum T.V."/>
            <person name="Buell C.R."/>
            <person name="Ketchum K.A."/>
            <person name="Lee J.J."/>
            <person name="Ronning C.M."/>
            <person name="Koo H.L."/>
            <person name="Moffat K.S."/>
            <person name="Cronin L.A."/>
            <person name="Shen M."/>
            <person name="Pai G."/>
            <person name="Van Aken S."/>
            <person name="Umayam L."/>
            <person name="Tallon L.J."/>
            <person name="Gill J.E."/>
            <person name="Adams M.D."/>
            <person name="Carrera A.J."/>
            <person name="Creasy T.H."/>
            <person name="Goodman H.M."/>
            <person name="Somerville C.R."/>
            <person name="Copenhaver G.P."/>
            <person name="Preuss D."/>
            <person name="Nierman W.C."/>
            <person name="White O."/>
            <person name="Eisen J.A."/>
            <person name="Salzberg S.L."/>
            <person name="Fraser C.M."/>
            <person name="Venter J.C."/>
        </authorList>
    </citation>
    <scope>NUCLEOTIDE SEQUENCE [LARGE SCALE GENOMIC DNA]</scope>
    <source>
        <strain>cv. Columbia</strain>
    </source>
</reference>
<reference key="2">
    <citation type="journal article" date="2017" name="Plant J.">
        <title>Araport11: a complete reannotation of the Arabidopsis thaliana reference genome.</title>
        <authorList>
            <person name="Cheng C.Y."/>
            <person name="Krishnakumar V."/>
            <person name="Chan A.P."/>
            <person name="Thibaud-Nissen F."/>
            <person name="Schobel S."/>
            <person name="Town C.D."/>
        </authorList>
    </citation>
    <scope>GENOME REANNOTATION</scope>
    <source>
        <strain>cv. Columbia</strain>
    </source>
</reference>
<reference key="3">
    <citation type="journal article" date="2003" name="Science">
        <title>Empirical analysis of transcriptional activity in the Arabidopsis genome.</title>
        <authorList>
            <person name="Yamada K."/>
            <person name="Lim J."/>
            <person name="Dale J.M."/>
            <person name="Chen H."/>
            <person name="Shinn P."/>
            <person name="Palm C.J."/>
            <person name="Southwick A.M."/>
            <person name="Wu H.C."/>
            <person name="Kim C.J."/>
            <person name="Nguyen M."/>
            <person name="Pham P.K."/>
            <person name="Cheuk R.F."/>
            <person name="Karlin-Newmann G."/>
            <person name="Liu S.X."/>
            <person name="Lam B."/>
            <person name="Sakano H."/>
            <person name="Wu T."/>
            <person name="Yu G."/>
            <person name="Miranda M."/>
            <person name="Quach H.L."/>
            <person name="Tripp M."/>
            <person name="Chang C.H."/>
            <person name="Lee J.M."/>
            <person name="Toriumi M.J."/>
            <person name="Chan M.M."/>
            <person name="Tang C.C."/>
            <person name="Onodera C.S."/>
            <person name="Deng J.M."/>
            <person name="Akiyama K."/>
            <person name="Ansari Y."/>
            <person name="Arakawa T."/>
            <person name="Banh J."/>
            <person name="Banno F."/>
            <person name="Bowser L."/>
            <person name="Brooks S.Y."/>
            <person name="Carninci P."/>
            <person name="Chao Q."/>
            <person name="Choy N."/>
            <person name="Enju A."/>
            <person name="Goldsmith A.D."/>
            <person name="Gurjal M."/>
            <person name="Hansen N.F."/>
            <person name="Hayashizaki Y."/>
            <person name="Johnson-Hopson C."/>
            <person name="Hsuan V.W."/>
            <person name="Iida K."/>
            <person name="Karnes M."/>
            <person name="Khan S."/>
            <person name="Koesema E."/>
            <person name="Ishida J."/>
            <person name="Jiang P.X."/>
            <person name="Jones T."/>
            <person name="Kawai J."/>
            <person name="Kamiya A."/>
            <person name="Meyers C."/>
            <person name="Nakajima M."/>
            <person name="Narusaka M."/>
            <person name="Seki M."/>
            <person name="Sakurai T."/>
            <person name="Satou M."/>
            <person name="Tamse R."/>
            <person name="Vaysberg M."/>
            <person name="Wallender E.K."/>
            <person name="Wong C."/>
            <person name="Yamamura Y."/>
            <person name="Yuan S."/>
            <person name="Shinozaki K."/>
            <person name="Davis R.W."/>
            <person name="Theologis A."/>
            <person name="Ecker J.R."/>
        </authorList>
    </citation>
    <scope>NUCLEOTIDE SEQUENCE [LARGE SCALE MRNA]</scope>
    <source>
        <strain>cv. Columbia</strain>
    </source>
</reference>
<reference key="4">
    <citation type="journal article" date="2015" name="Nature">
        <title>A new cyanogenic metabolite in Arabidopsis required for inducible pathogen defence.</title>
        <authorList>
            <person name="Rajniak J."/>
            <person name="Barco B."/>
            <person name="Clay N.K."/>
            <person name="Sattely E.S."/>
        </authorList>
    </citation>
    <scope>FUNCTION</scope>
    <scope>DISRUPTION PHENOTYPE</scope>
</reference>